<dbReference type="EC" id="2.3.1.35" evidence="1"/>
<dbReference type="EC" id="2.3.1.1" evidence="1"/>
<dbReference type="EMBL" id="CP000001">
    <property type="protein sequence ID" value="AAU16382.1"/>
    <property type="molecule type" value="Genomic_DNA"/>
</dbReference>
<dbReference type="SMR" id="Q635F1"/>
<dbReference type="MEROPS" id="T05.002"/>
<dbReference type="KEGG" id="bcz:BCE33L3886"/>
<dbReference type="UniPathway" id="UPA00068">
    <property type="reaction ID" value="UER00106"/>
</dbReference>
<dbReference type="UniPathway" id="UPA00068">
    <property type="reaction ID" value="UER00111"/>
</dbReference>
<dbReference type="Proteomes" id="UP000002612">
    <property type="component" value="Chromosome"/>
</dbReference>
<dbReference type="GO" id="GO:0005737">
    <property type="term" value="C:cytoplasm"/>
    <property type="evidence" value="ECO:0007669"/>
    <property type="project" value="UniProtKB-SubCell"/>
</dbReference>
<dbReference type="GO" id="GO:0004358">
    <property type="term" value="F:glutamate N-acetyltransferase activity"/>
    <property type="evidence" value="ECO:0007669"/>
    <property type="project" value="UniProtKB-UniRule"/>
</dbReference>
<dbReference type="GO" id="GO:0004042">
    <property type="term" value="F:L-glutamate N-acetyltransferase activity"/>
    <property type="evidence" value="ECO:0007669"/>
    <property type="project" value="UniProtKB-UniRule"/>
</dbReference>
<dbReference type="GO" id="GO:0006526">
    <property type="term" value="P:L-arginine biosynthetic process"/>
    <property type="evidence" value="ECO:0007669"/>
    <property type="project" value="UniProtKB-UniRule"/>
</dbReference>
<dbReference type="GO" id="GO:0006592">
    <property type="term" value="P:ornithine biosynthetic process"/>
    <property type="evidence" value="ECO:0007669"/>
    <property type="project" value="TreeGrafter"/>
</dbReference>
<dbReference type="CDD" id="cd02152">
    <property type="entry name" value="OAT"/>
    <property type="match status" value="1"/>
</dbReference>
<dbReference type="FunFam" id="3.10.20.340:FF:000001">
    <property type="entry name" value="Arginine biosynthesis bifunctional protein ArgJ, chloroplastic"/>
    <property type="match status" value="1"/>
</dbReference>
<dbReference type="FunFam" id="3.60.70.12:FF:000001">
    <property type="entry name" value="Arginine biosynthesis bifunctional protein ArgJ, chloroplastic"/>
    <property type="match status" value="1"/>
</dbReference>
<dbReference type="FunFam" id="3.30.2330.10:FF:000001">
    <property type="entry name" value="Arginine biosynthesis bifunctional protein ArgJ, mitochondrial"/>
    <property type="match status" value="1"/>
</dbReference>
<dbReference type="Gene3D" id="3.30.2330.10">
    <property type="entry name" value="arginine biosynthesis bifunctional protein suprefamily"/>
    <property type="match status" value="1"/>
</dbReference>
<dbReference type="Gene3D" id="3.10.20.340">
    <property type="entry name" value="ArgJ beta chain, C-terminal domain"/>
    <property type="match status" value="1"/>
</dbReference>
<dbReference type="Gene3D" id="3.60.70.12">
    <property type="entry name" value="L-amino peptidase D-ALA esterase/amidase"/>
    <property type="match status" value="1"/>
</dbReference>
<dbReference type="HAMAP" id="MF_01106">
    <property type="entry name" value="ArgJ"/>
    <property type="match status" value="1"/>
</dbReference>
<dbReference type="InterPro" id="IPR002813">
    <property type="entry name" value="Arg_biosynth_ArgJ"/>
</dbReference>
<dbReference type="InterPro" id="IPR016117">
    <property type="entry name" value="ArgJ-like_dom_sf"/>
</dbReference>
<dbReference type="InterPro" id="IPR042195">
    <property type="entry name" value="ArgJ_beta_C"/>
</dbReference>
<dbReference type="NCBIfam" id="TIGR00120">
    <property type="entry name" value="ArgJ"/>
    <property type="match status" value="1"/>
</dbReference>
<dbReference type="NCBIfam" id="NF003802">
    <property type="entry name" value="PRK05388.1"/>
    <property type="match status" value="1"/>
</dbReference>
<dbReference type="PANTHER" id="PTHR23100">
    <property type="entry name" value="ARGININE BIOSYNTHESIS BIFUNCTIONAL PROTEIN ARGJ"/>
    <property type="match status" value="1"/>
</dbReference>
<dbReference type="PANTHER" id="PTHR23100:SF0">
    <property type="entry name" value="ARGININE BIOSYNTHESIS BIFUNCTIONAL PROTEIN ARGJ, MITOCHONDRIAL"/>
    <property type="match status" value="1"/>
</dbReference>
<dbReference type="Pfam" id="PF01960">
    <property type="entry name" value="ArgJ"/>
    <property type="match status" value="1"/>
</dbReference>
<dbReference type="SUPFAM" id="SSF56266">
    <property type="entry name" value="DmpA/ArgJ-like"/>
    <property type="match status" value="1"/>
</dbReference>
<evidence type="ECO:0000255" key="1">
    <source>
        <dbReference type="HAMAP-Rule" id="MF_01106"/>
    </source>
</evidence>
<keyword id="KW-0012">Acyltransferase</keyword>
<keyword id="KW-0028">Amino-acid biosynthesis</keyword>
<keyword id="KW-0055">Arginine biosynthesis</keyword>
<keyword id="KW-0068">Autocatalytic cleavage</keyword>
<keyword id="KW-0963">Cytoplasm</keyword>
<keyword id="KW-0511">Multifunctional enzyme</keyword>
<keyword id="KW-0808">Transferase</keyword>
<protein>
    <recommendedName>
        <fullName evidence="1">Arginine biosynthesis bifunctional protein ArgJ</fullName>
    </recommendedName>
    <domain>
        <recommendedName>
            <fullName evidence="1">Glutamate N-acetyltransferase</fullName>
            <ecNumber evidence="1">2.3.1.35</ecNumber>
        </recommendedName>
        <alternativeName>
            <fullName evidence="1">Ornithine acetyltransferase</fullName>
            <shortName evidence="1">OATase</shortName>
        </alternativeName>
        <alternativeName>
            <fullName evidence="1">Ornithine transacetylase</fullName>
        </alternativeName>
    </domain>
    <domain>
        <recommendedName>
            <fullName evidence="1">Amino-acid acetyltransferase</fullName>
            <ecNumber evidence="1">2.3.1.1</ecNumber>
        </recommendedName>
        <alternativeName>
            <fullName evidence="1">N-acetylglutamate synthase</fullName>
            <shortName evidence="1">AGSase</shortName>
        </alternativeName>
    </domain>
    <component>
        <recommendedName>
            <fullName evidence="1">Arginine biosynthesis bifunctional protein ArgJ alpha chain</fullName>
        </recommendedName>
    </component>
    <component>
        <recommendedName>
            <fullName evidence="1">Arginine biosynthesis bifunctional protein ArgJ beta chain</fullName>
        </recommendedName>
    </component>
</protein>
<sequence length="408" mass="43924">MMVKVASITKLEDGSIVTPKGFSAIGTAIGLKKGKKDLGAIVCDTPASCAAVYTTNQIQAAPLQVTKDSIATEGKLQAIIVNSGNANACTGMKGLQDAYEMRALGAEHFGVKENYVAVASTGVIGVPLPMEIIRKGIVTLIPAKEENEAHSFSEAILTTDLITKETCYEMIIDGKKVTIAGVAKGSGMIHPNMATMLSFITTDAHIEHDVLQTALSQITNHTFNQITVDGDTSTNDMVIAMASGLSETKPIDMEHADWETFVFALQKVCEDLAKKIAQDGEGATKLIEVNVLGAQTNEEAKKIAKQIVGSSLVKTAIHGEDPNWGRIISSIGQSEVAINPNTIDITLQSIVVLKNSEPQMFSEEEMKMRLQEHEIMIDVYLHLGEETGSAWGCDLSYEYVKINACYRT</sequence>
<comment type="function">
    <text evidence="1">Catalyzes two activities which are involved in the cyclic version of arginine biosynthesis: the synthesis of N-acetylglutamate from glutamate and acetyl-CoA as the acetyl donor, and of ornithine by transacetylation between N(2)-acetylornithine and glutamate.</text>
</comment>
<comment type="catalytic activity">
    <reaction evidence="1">
        <text>N(2)-acetyl-L-ornithine + L-glutamate = N-acetyl-L-glutamate + L-ornithine</text>
        <dbReference type="Rhea" id="RHEA:15349"/>
        <dbReference type="ChEBI" id="CHEBI:29985"/>
        <dbReference type="ChEBI" id="CHEBI:44337"/>
        <dbReference type="ChEBI" id="CHEBI:46911"/>
        <dbReference type="ChEBI" id="CHEBI:57805"/>
        <dbReference type="EC" id="2.3.1.35"/>
    </reaction>
</comment>
<comment type="catalytic activity">
    <reaction evidence="1">
        <text>L-glutamate + acetyl-CoA = N-acetyl-L-glutamate + CoA + H(+)</text>
        <dbReference type="Rhea" id="RHEA:24292"/>
        <dbReference type="ChEBI" id="CHEBI:15378"/>
        <dbReference type="ChEBI" id="CHEBI:29985"/>
        <dbReference type="ChEBI" id="CHEBI:44337"/>
        <dbReference type="ChEBI" id="CHEBI:57287"/>
        <dbReference type="ChEBI" id="CHEBI:57288"/>
        <dbReference type="EC" id="2.3.1.1"/>
    </reaction>
</comment>
<comment type="pathway">
    <text evidence="1">Amino-acid biosynthesis; L-arginine biosynthesis; L-ornithine and N-acetyl-L-glutamate from L-glutamate and N(2)-acetyl-L-ornithine (cyclic): step 1/1.</text>
</comment>
<comment type="pathway">
    <text evidence="1">Amino-acid biosynthesis; L-arginine biosynthesis; N(2)-acetyl-L-ornithine from L-glutamate: step 1/4.</text>
</comment>
<comment type="subunit">
    <text evidence="1">Heterotetramer of two alpha and two beta chains.</text>
</comment>
<comment type="subcellular location">
    <subcellularLocation>
        <location evidence="1">Cytoplasm</location>
    </subcellularLocation>
</comment>
<comment type="similarity">
    <text evidence="1">Belongs to the ArgJ family.</text>
</comment>
<reference key="1">
    <citation type="journal article" date="2006" name="J. Bacteriol.">
        <title>Pathogenomic sequence analysis of Bacillus cereus and Bacillus thuringiensis isolates closely related to Bacillus anthracis.</title>
        <authorList>
            <person name="Han C.S."/>
            <person name="Xie G."/>
            <person name="Challacombe J.F."/>
            <person name="Altherr M.R."/>
            <person name="Bhotika S.S."/>
            <person name="Bruce D."/>
            <person name="Campbell C.S."/>
            <person name="Campbell M.L."/>
            <person name="Chen J."/>
            <person name="Chertkov O."/>
            <person name="Cleland C."/>
            <person name="Dimitrijevic M."/>
            <person name="Doggett N.A."/>
            <person name="Fawcett J.J."/>
            <person name="Glavina T."/>
            <person name="Goodwin L.A."/>
            <person name="Hill K.K."/>
            <person name="Hitchcock P."/>
            <person name="Jackson P.J."/>
            <person name="Keim P."/>
            <person name="Kewalramani A.R."/>
            <person name="Longmire J."/>
            <person name="Lucas S."/>
            <person name="Malfatti S."/>
            <person name="McMurry K."/>
            <person name="Meincke L.J."/>
            <person name="Misra M."/>
            <person name="Moseman B.L."/>
            <person name="Mundt M."/>
            <person name="Munk A.C."/>
            <person name="Okinaka R.T."/>
            <person name="Parson-Quintana B."/>
            <person name="Reilly L.P."/>
            <person name="Richardson P."/>
            <person name="Robinson D.L."/>
            <person name="Rubin E."/>
            <person name="Saunders E."/>
            <person name="Tapia R."/>
            <person name="Tesmer J.G."/>
            <person name="Thayer N."/>
            <person name="Thompson L.S."/>
            <person name="Tice H."/>
            <person name="Ticknor L.O."/>
            <person name="Wills P.L."/>
            <person name="Brettin T.S."/>
            <person name="Gilna P."/>
        </authorList>
    </citation>
    <scope>NUCLEOTIDE SEQUENCE [LARGE SCALE GENOMIC DNA]</scope>
    <source>
        <strain>ZK / E33L</strain>
    </source>
</reference>
<organism>
    <name type="scientific">Bacillus cereus (strain ZK / E33L)</name>
    <dbReference type="NCBI Taxonomy" id="288681"/>
    <lineage>
        <taxon>Bacteria</taxon>
        <taxon>Bacillati</taxon>
        <taxon>Bacillota</taxon>
        <taxon>Bacilli</taxon>
        <taxon>Bacillales</taxon>
        <taxon>Bacillaceae</taxon>
        <taxon>Bacillus</taxon>
        <taxon>Bacillus cereus group</taxon>
    </lineage>
</organism>
<accession>Q635F1</accession>
<name>ARGJ_BACCZ</name>
<gene>
    <name evidence="1" type="primary">argJ</name>
    <name type="ordered locus">BCE33L3886</name>
</gene>
<proteinExistence type="inferred from homology"/>
<feature type="chain" id="PRO_0000002111" description="Arginine biosynthesis bifunctional protein ArgJ alpha chain" evidence="1">
    <location>
        <begin position="1"/>
        <end position="194"/>
    </location>
</feature>
<feature type="chain" id="PRO_0000002112" description="Arginine biosynthesis bifunctional protein ArgJ beta chain" evidence="1">
    <location>
        <begin position="195"/>
        <end position="408"/>
    </location>
</feature>
<feature type="active site" description="Nucleophile" evidence="1">
    <location>
        <position position="195"/>
    </location>
</feature>
<feature type="binding site" evidence="1">
    <location>
        <position position="158"/>
    </location>
    <ligand>
        <name>substrate</name>
    </ligand>
</feature>
<feature type="binding site" evidence="1">
    <location>
        <position position="184"/>
    </location>
    <ligand>
        <name>substrate</name>
    </ligand>
</feature>
<feature type="binding site" evidence="1">
    <location>
        <position position="195"/>
    </location>
    <ligand>
        <name>substrate</name>
    </ligand>
</feature>
<feature type="binding site" evidence="1">
    <location>
        <position position="281"/>
    </location>
    <ligand>
        <name>substrate</name>
    </ligand>
</feature>
<feature type="binding site" evidence="1">
    <location>
        <position position="403"/>
    </location>
    <ligand>
        <name>substrate</name>
    </ligand>
</feature>
<feature type="binding site" evidence="1">
    <location>
        <position position="408"/>
    </location>
    <ligand>
        <name>substrate</name>
    </ligand>
</feature>
<feature type="site" description="Involved in the stabilization of negative charge on the oxyanion by the formation of the oxyanion hole" evidence="1">
    <location>
        <position position="121"/>
    </location>
</feature>
<feature type="site" description="Involved in the stabilization of negative charge on the oxyanion by the formation of the oxyanion hole" evidence="1">
    <location>
        <position position="122"/>
    </location>
</feature>
<feature type="site" description="Cleavage; by autolysis" evidence="1">
    <location>
        <begin position="194"/>
        <end position="195"/>
    </location>
</feature>